<protein>
    <recommendedName>
        <fullName evidence="1">1,4-alpha-glucan branching enzyme GlgB 2</fullName>
        <ecNumber evidence="1">2.4.1.18</ecNumber>
    </recommendedName>
    <alternativeName>
        <fullName evidence="1">1,4-alpha-D-glucan:1,4-alpha-D-glucan 6-glucosyl-transferase 2</fullName>
    </alternativeName>
    <alternativeName>
        <fullName evidence="1">Alpha-(1-&gt;4)-glucan branching enzyme 2</fullName>
    </alternativeName>
    <alternativeName>
        <fullName evidence="1">Glycogen branching enzyme 2</fullName>
        <shortName evidence="1">BE 2</shortName>
    </alternativeName>
</protein>
<evidence type="ECO:0000255" key="1">
    <source>
        <dbReference type="HAMAP-Rule" id="MF_00685"/>
    </source>
</evidence>
<keyword id="KW-0119">Carbohydrate metabolism</keyword>
<keyword id="KW-0320">Glycogen biosynthesis</keyword>
<keyword id="KW-0321">Glycogen metabolism</keyword>
<keyword id="KW-0328">Glycosyltransferase</keyword>
<keyword id="KW-0808">Transferase</keyword>
<organism>
    <name type="scientific">Xanthomonas campestris pv. campestris (strain 8004)</name>
    <dbReference type="NCBI Taxonomy" id="314565"/>
    <lineage>
        <taxon>Bacteria</taxon>
        <taxon>Pseudomonadati</taxon>
        <taxon>Pseudomonadota</taxon>
        <taxon>Gammaproteobacteria</taxon>
        <taxon>Lysobacterales</taxon>
        <taxon>Lysobacteraceae</taxon>
        <taxon>Xanthomonas</taxon>
    </lineage>
</organism>
<feature type="chain" id="PRO_0000260715" description="1,4-alpha-glucan branching enzyme GlgB 2">
    <location>
        <begin position="1"/>
        <end position="729"/>
    </location>
</feature>
<feature type="active site" description="Nucleophile" evidence="1">
    <location>
        <position position="408"/>
    </location>
</feature>
<feature type="active site" description="Proton donor" evidence="1">
    <location>
        <position position="461"/>
    </location>
</feature>
<proteinExistence type="inferred from homology"/>
<sequence length="729" mass="79972">MAEGGGGSAVALQDLQAIAAGLPGDAFAVLGPHVQADGRLRVRVLAPGAEALGLIDGRGKLLARMQASPIDGVFEGELPADAAYRLRIVWPDVVQEIEDPYAFAPQIDESALLQIGAGDGQALRANLGARHVQVGELPAVRFAVWAPHAQRVAVVGDFNGWEPRRHPMRQRSGGIWELVLPRVETGARYKYAIITADGRVLLKADPVARQSELPPATASVVASADAFAWTDAEWMARRSAAAEPAPLSIYEVHAASWRRDGHDQPLDWVSLAAQLIPYVQELGFTHIELLPITEHPFGGSWGYQPLGLYAPTARHGSPDGFAQFVDACHRAGIGVILDWVSAHFPDDAHGLSQFDGSATYEHADPREGMHRDWNTLIYNYGRPEVTAYLLGSAMEWIAHYHLDGLRVDAVASMLYRDYGRAEGEWVPNAHGGRENLEAVAFLRQLTGEIASQFPGVLTIAEESTAWPGVTAPISEGGLGFTHKWNMGWMHDTLHYMQRDPAARAQHHSQLTFGLVYAFSERFVLPLSHDEVVHGTGGLLGQMPGDDWRRFANLRAYLALMWAHPGDKLLFMGAEFGQWADWNHDRSLDWHLLDHAPHRGMQQLVRDLNRALRRVPALYRGNHRADGFEWSVADDARNSVLAFIRHDPDGGAPLLAVSNLTPQPHHDYRVGVPRAGGWREILNTDSAHYGGSNLGNGGRLLTEPTGMHGHAQSLRLTLPPLATIYLQAEK</sequence>
<dbReference type="EC" id="2.4.1.18" evidence="1"/>
<dbReference type="EMBL" id="CP000050">
    <property type="protein sequence ID" value="AAY47506.1"/>
    <property type="molecule type" value="Genomic_DNA"/>
</dbReference>
<dbReference type="RefSeq" id="WP_011035662.1">
    <property type="nucleotide sequence ID" value="NZ_CP155948.1"/>
</dbReference>
<dbReference type="SMR" id="Q4UZL7"/>
<dbReference type="CAZy" id="CBM48">
    <property type="family name" value="Carbohydrate-Binding Module Family 48"/>
</dbReference>
<dbReference type="CAZy" id="GH13">
    <property type="family name" value="Glycoside Hydrolase Family 13"/>
</dbReference>
<dbReference type="KEGG" id="xcb:XC_0422"/>
<dbReference type="HOGENOM" id="CLU_004245_3_2_6"/>
<dbReference type="UniPathway" id="UPA00164"/>
<dbReference type="Proteomes" id="UP000000420">
    <property type="component" value="Chromosome"/>
</dbReference>
<dbReference type="GO" id="GO:0005829">
    <property type="term" value="C:cytosol"/>
    <property type="evidence" value="ECO:0007669"/>
    <property type="project" value="TreeGrafter"/>
</dbReference>
<dbReference type="GO" id="GO:0003844">
    <property type="term" value="F:1,4-alpha-glucan branching enzyme activity"/>
    <property type="evidence" value="ECO:0007669"/>
    <property type="project" value="UniProtKB-UniRule"/>
</dbReference>
<dbReference type="GO" id="GO:0043169">
    <property type="term" value="F:cation binding"/>
    <property type="evidence" value="ECO:0007669"/>
    <property type="project" value="InterPro"/>
</dbReference>
<dbReference type="GO" id="GO:0004553">
    <property type="term" value="F:hydrolase activity, hydrolyzing O-glycosyl compounds"/>
    <property type="evidence" value="ECO:0007669"/>
    <property type="project" value="InterPro"/>
</dbReference>
<dbReference type="GO" id="GO:0005978">
    <property type="term" value="P:glycogen biosynthetic process"/>
    <property type="evidence" value="ECO:0007669"/>
    <property type="project" value="UniProtKB-UniRule"/>
</dbReference>
<dbReference type="CDD" id="cd11322">
    <property type="entry name" value="AmyAc_Glg_BE"/>
    <property type="match status" value="1"/>
</dbReference>
<dbReference type="CDD" id="cd02855">
    <property type="entry name" value="E_set_GBE_prok_N"/>
    <property type="match status" value="1"/>
</dbReference>
<dbReference type="FunFam" id="2.60.40.1180:FF:000002">
    <property type="entry name" value="1,4-alpha-glucan branching enzyme GlgB"/>
    <property type="match status" value="1"/>
</dbReference>
<dbReference type="FunFam" id="3.20.20.80:FF:000003">
    <property type="entry name" value="1,4-alpha-glucan branching enzyme GlgB"/>
    <property type="match status" value="1"/>
</dbReference>
<dbReference type="Gene3D" id="3.20.20.80">
    <property type="entry name" value="Glycosidases"/>
    <property type="match status" value="1"/>
</dbReference>
<dbReference type="Gene3D" id="2.60.40.1180">
    <property type="entry name" value="Golgi alpha-mannosidase II"/>
    <property type="match status" value="1"/>
</dbReference>
<dbReference type="Gene3D" id="2.60.40.10">
    <property type="entry name" value="Immunoglobulins"/>
    <property type="match status" value="2"/>
</dbReference>
<dbReference type="HAMAP" id="MF_00685">
    <property type="entry name" value="GlgB"/>
    <property type="match status" value="1"/>
</dbReference>
<dbReference type="InterPro" id="IPR006048">
    <property type="entry name" value="A-amylase/branching_C"/>
</dbReference>
<dbReference type="InterPro" id="IPR037439">
    <property type="entry name" value="Branching_enzy"/>
</dbReference>
<dbReference type="InterPro" id="IPR006407">
    <property type="entry name" value="GlgB"/>
</dbReference>
<dbReference type="InterPro" id="IPR054169">
    <property type="entry name" value="GlgB_N"/>
</dbReference>
<dbReference type="InterPro" id="IPR044143">
    <property type="entry name" value="GlgB_N_E_set_prok"/>
</dbReference>
<dbReference type="InterPro" id="IPR006047">
    <property type="entry name" value="Glyco_hydro_13_cat_dom"/>
</dbReference>
<dbReference type="InterPro" id="IPR004193">
    <property type="entry name" value="Glyco_hydro_13_N"/>
</dbReference>
<dbReference type="InterPro" id="IPR013780">
    <property type="entry name" value="Glyco_hydro_b"/>
</dbReference>
<dbReference type="InterPro" id="IPR017853">
    <property type="entry name" value="Glycoside_hydrolase_SF"/>
</dbReference>
<dbReference type="InterPro" id="IPR013783">
    <property type="entry name" value="Ig-like_fold"/>
</dbReference>
<dbReference type="InterPro" id="IPR014756">
    <property type="entry name" value="Ig_E-set"/>
</dbReference>
<dbReference type="NCBIfam" id="TIGR01515">
    <property type="entry name" value="branching_enzym"/>
    <property type="match status" value="1"/>
</dbReference>
<dbReference type="NCBIfam" id="NF003811">
    <property type="entry name" value="PRK05402.1"/>
    <property type="match status" value="1"/>
</dbReference>
<dbReference type="NCBIfam" id="NF008967">
    <property type="entry name" value="PRK12313.1"/>
    <property type="match status" value="1"/>
</dbReference>
<dbReference type="NCBIfam" id="NF009221">
    <property type="entry name" value="PRK12568.1"/>
    <property type="match status" value="1"/>
</dbReference>
<dbReference type="PANTHER" id="PTHR43651">
    <property type="entry name" value="1,4-ALPHA-GLUCAN-BRANCHING ENZYME"/>
    <property type="match status" value="1"/>
</dbReference>
<dbReference type="PANTHER" id="PTHR43651:SF3">
    <property type="entry name" value="1,4-ALPHA-GLUCAN-BRANCHING ENZYME"/>
    <property type="match status" value="1"/>
</dbReference>
<dbReference type="Pfam" id="PF00128">
    <property type="entry name" value="Alpha-amylase"/>
    <property type="match status" value="1"/>
</dbReference>
<dbReference type="Pfam" id="PF02806">
    <property type="entry name" value="Alpha-amylase_C"/>
    <property type="match status" value="1"/>
</dbReference>
<dbReference type="Pfam" id="PF02922">
    <property type="entry name" value="CBM_48"/>
    <property type="match status" value="1"/>
</dbReference>
<dbReference type="Pfam" id="PF22019">
    <property type="entry name" value="GlgB_N"/>
    <property type="match status" value="1"/>
</dbReference>
<dbReference type="PIRSF" id="PIRSF000463">
    <property type="entry name" value="GlgB"/>
    <property type="match status" value="1"/>
</dbReference>
<dbReference type="SMART" id="SM00642">
    <property type="entry name" value="Aamy"/>
    <property type="match status" value="1"/>
</dbReference>
<dbReference type="SUPFAM" id="SSF51445">
    <property type="entry name" value="(Trans)glycosidases"/>
    <property type="match status" value="1"/>
</dbReference>
<dbReference type="SUPFAM" id="SSF81296">
    <property type="entry name" value="E set domains"/>
    <property type="match status" value="1"/>
</dbReference>
<dbReference type="SUPFAM" id="SSF51011">
    <property type="entry name" value="Glycosyl hydrolase domain"/>
    <property type="match status" value="1"/>
</dbReference>
<gene>
    <name evidence="1" type="primary">glgB2</name>
    <name type="ordered locus">XC_0422</name>
</gene>
<comment type="function">
    <text evidence="1">Catalyzes the formation of the alpha-1,6-glucosidic linkages in glycogen by scission of a 1,4-alpha-linked oligosaccharide from growing alpha-1,4-glucan chains and the subsequent attachment of the oligosaccharide to the alpha-1,6 position.</text>
</comment>
<comment type="catalytic activity">
    <reaction evidence="1">
        <text>Transfers a segment of a (1-&gt;4)-alpha-D-glucan chain to a primary hydroxy group in a similar glucan chain.</text>
        <dbReference type="EC" id="2.4.1.18"/>
    </reaction>
</comment>
<comment type="pathway">
    <text evidence="1">Glycan biosynthesis; glycogen biosynthesis.</text>
</comment>
<comment type="subunit">
    <text evidence="1">Monomer.</text>
</comment>
<comment type="similarity">
    <text evidence="1">Belongs to the glycosyl hydrolase 13 family. GlgB subfamily.</text>
</comment>
<accession>Q4UZL7</accession>
<reference key="1">
    <citation type="journal article" date="2005" name="Genome Res.">
        <title>Comparative and functional genomic analyses of the pathogenicity of phytopathogen Xanthomonas campestris pv. campestris.</title>
        <authorList>
            <person name="Qian W."/>
            <person name="Jia Y."/>
            <person name="Ren S.-X."/>
            <person name="He Y.-Q."/>
            <person name="Feng J.-X."/>
            <person name="Lu L.-F."/>
            <person name="Sun Q."/>
            <person name="Ying G."/>
            <person name="Tang D.-J."/>
            <person name="Tang H."/>
            <person name="Wu W."/>
            <person name="Hao P."/>
            <person name="Wang L."/>
            <person name="Jiang B.-L."/>
            <person name="Zeng S."/>
            <person name="Gu W.-Y."/>
            <person name="Lu G."/>
            <person name="Rong L."/>
            <person name="Tian Y."/>
            <person name="Yao Z."/>
            <person name="Fu G."/>
            <person name="Chen B."/>
            <person name="Fang R."/>
            <person name="Qiang B."/>
            <person name="Chen Z."/>
            <person name="Zhao G.-P."/>
            <person name="Tang J.-L."/>
            <person name="He C."/>
        </authorList>
    </citation>
    <scope>NUCLEOTIDE SEQUENCE [LARGE SCALE GENOMIC DNA]</scope>
    <source>
        <strain>8004</strain>
    </source>
</reference>
<name>GLGB2_XANC8</name>